<organism>
    <name type="scientific">Psychromonas ingrahamii (strain DSM 17664 / CCUG 51855 / 37)</name>
    <dbReference type="NCBI Taxonomy" id="357804"/>
    <lineage>
        <taxon>Bacteria</taxon>
        <taxon>Pseudomonadati</taxon>
        <taxon>Pseudomonadota</taxon>
        <taxon>Gammaproteobacteria</taxon>
        <taxon>Alteromonadales</taxon>
        <taxon>Psychromonadaceae</taxon>
        <taxon>Psychromonas</taxon>
    </lineage>
</organism>
<comment type="function">
    <text evidence="2">Catalyzes the reversible phosphorolytic breakdown of the N-glycosidic bond in the beta-(deoxy)ribonucleoside molecules, with the formation of the corresponding free purine bases and pentose-1-phosphate.</text>
</comment>
<comment type="catalytic activity">
    <reaction evidence="2">
        <text>a purine D-ribonucleoside + phosphate = a purine nucleobase + alpha-D-ribose 1-phosphate</text>
        <dbReference type="Rhea" id="RHEA:19805"/>
        <dbReference type="ChEBI" id="CHEBI:26386"/>
        <dbReference type="ChEBI" id="CHEBI:43474"/>
        <dbReference type="ChEBI" id="CHEBI:57720"/>
        <dbReference type="ChEBI" id="CHEBI:142355"/>
        <dbReference type="EC" id="2.4.2.1"/>
    </reaction>
</comment>
<comment type="catalytic activity">
    <reaction evidence="2">
        <text>a purine 2'-deoxy-D-ribonucleoside + phosphate = a purine nucleobase + 2-deoxy-alpha-D-ribose 1-phosphate</text>
        <dbReference type="Rhea" id="RHEA:36431"/>
        <dbReference type="ChEBI" id="CHEBI:26386"/>
        <dbReference type="ChEBI" id="CHEBI:43474"/>
        <dbReference type="ChEBI" id="CHEBI:57259"/>
        <dbReference type="ChEBI" id="CHEBI:142361"/>
        <dbReference type="EC" id="2.4.2.1"/>
    </reaction>
</comment>
<comment type="subunit">
    <text evidence="2">Homohexamer; trimer of homodimers.</text>
</comment>
<comment type="similarity">
    <text evidence="2">Belongs to the PNP/UDP phosphorylase family.</text>
</comment>
<feature type="chain" id="PRO_1000069639" description="Purine nucleoside phosphorylase DeoD-type">
    <location>
        <begin position="1"/>
        <end position="236"/>
    </location>
</feature>
<feature type="active site" description="Proton donor" evidence="2">
    <location>
        <position position="205"/>
    </location>
</feature>
<feature type="binding site" evidence="1">
    <location>
        <position position="5"/>
    </location>
    <ligand>
        <name>a purine D-ribonucleoside</name>
        <dbReference type="ChEBI" id="CHEBI:142355"/>
        <note>ligand shared between dimeric partners</note>
    </ligand>
</feature>
<feature type="binding site" description="in other chain" evidence="1">
    <location>
        <position position="21"/>
    </location>
    <ligand>
        <name>phosphate</name>
        <dbReference type="ChEBI" id="CHEBI:43474"/>
        <note>ligand shared between dimeric partners</note>
    </ligand>
</feature>
<feature type="binding site" description="in other chain" evidence="1">
    <location>
        <position position="25"/>
    </location>
    <ligand>
        <name>phosphate</name>
        <dbReference type="ChEBI" id="CHEBI:43474"/>
        <note>ligand shared between dimeric partners</note>
    </ligand>
</feature>
<feature type="binding site" evidence="1">
    <location>
        <position position="44"/>
    </location>
    <ligand>
        <name>phosphate</name>
        <dbReference type="ChEBI" id="CHEBI:43474"/>
        <note>ligand shared between dimeric partners</note>
    </ligand>
</feature>
<feature type="binding site" description="in other chain" evidence="1">
    <location>
        <begin position="88"/>
        <end position="91"/>
    </location>
    <ligand>
        <name>phosphate</name>
        <dbReference type="ChEBI" id="CHEBI:43474"/>
        <note>ligand shared between dimeric partners</note>
    </ligand>
</feature>
<feature type="binding site" description="in other chain" evidence="1">
    <location>
        <begin position="180"/>
        <end position="182"/>
    </location>
    <ligand>
        <name>a purine D-ribonucleoside</name>
        <dbReference type="ChEBI" id="CHEBI:142355"/>
        <note>ligand shared between dimeric partners</note>
    </ligand>
</feature>
<feature type="binding site" description="in other chain" evidence="1">
    <location>
        <begin position="204"/>
        <end position="205"/>
    </location>
    <ligand>
        <name>a purine D-ribonucleoside</name>
        <dbReference type="ChEBI" id="CHEBI:142355"/>
        <note>ligand shared between dimeric partners</note>
    </ligand>
</feature>
<feature type="site" description="Important for catalytic activity" evidence="2">
    <location>
        <position position="218"/>
    </location>
</feature>
<evidence type="ECO:0000250" key="1">
    <source>
        <dbReference type="UniProtKB" id="P50389"/>
    </source>
</evidence>
<evidence type="ECO:0000255" key="2">
    <source>
        <dbReference type="HAMAP-Rule" id="MF_01627"/>
    </source>
</evidence>
<proteinExistence type="inferred from homology"/>
<dbReference type="EC" id="2.4.2.1" evidence="2"/>
<dbReference type="EMBL" id="CP000510">
    <property type="protein sequence ID" value="ABM04569.1"/>
    <property type="molecule type" value="Genomic_DNA"/>
</dbReference>
<dbReference type="RefSeq" id="WP_011771123.1">
    <property type="nucleotide sequence ID" value="NC_008709.1"/>
</dbReference>
<dbReference type="SMR" id="A1SYK4"/>
<dbReference type="STRING" id="357804.Ping_2864"/>
<dbReference type="KEGG" id="pin:Ping_2864"/>
<dbReference type="eggNOG" id="COG0813">
    <property type="taxonomic scope" value="Bacteria"/>
</dbReference>
<dbReference type="HOGENOM" id="CLU_068457_2_0_6"/>
<dbReference type="OrthoDB" id="9782889at2"/>
<dbReference type="Proteomes" id="UP000000639">
    <property type="component" value="Chromosome"/>
</dbReference>
<dbReference type="GO" id="GO:0005829">
    <property type="term" value="C:cytosol"/>
    <property type="evidence" value="ECO:0007669"/>
    <property type="project" value="TreeGrafter"/>
</dbReference>
<dbReference type="GO" id="GO:0004731">
    <property type="term" value="F:purine-nucleoside phosphorylase activity"/>
    <property type="evidence" value="ECO:0007669"/>
    <property type="project" value="UniProtKB-UniRule"/>
</dbReference>
<dbReference type="GO" id="GO:0006152">
    <property type="term" value="P:purine nucleoside catabolic process"/>
    <property type="evidence" value="ECO:0007669"/>
    <property type="project" value="TreeGrafter"/>
</dbReference>
<dbReference type="CDD" id="cd09006">
    <property type="entry name" value="PNP_EcPNPI-like"/>
    <property type="match status" value="1"/>
</dbReference>
<dbReference type="Gene3D" id="3.40.50.1580">
    <property type="entry name" value="Nucleoside phosphorylase domain"/>
    <property type="match status" value="1"/>
</dbReference>
<dbReference type="HAMAP" id="MF_01627">
    <property type="entry name" value="Pur_nucleosid_phosp"/>
    <property type="match status" value="1"/>
</dbReference>
<dbReference type="InterPro" id="IPR004402">
    <property type="entry name" value="DeoD-type"/>
</dbReference>
<dbReference type="InterPro" id="IPR018016">
    <property type="entry name" value="Nucleoside_phosphorylase_CS"/>
</dbReference>
<dbReference type="InterPro" id="IPR000845">
    <property type="entry name" value="Nucleoside_phosphorylase_d"/>
</dbReference>
<dbReference type="InterPro" id="IPR035994">
    <property type="entry name" value="Nucleoside_phosphorylase_sf"/>
</dbReference>
<dbReference type="NCBIfam" id="TIGR00107">
    <property type="entry name" value="deoD"/>
    <property type="match status" value="1"/>
</dbReference>
<dbReference type="NCBIfam" id="NF004489">
    <property type="entry name" value="PRK05819.1"/>
    <property type="match status" value="1"/>
</dbReference>
<dbReference type="NCBIfam" id="NF009914">
    <property type="entry name" value="PRK13374.1"/>
    <property type="match status" value="1"/>
</dbReference>
<dbReference type="PANTHER" id="PTHR43691:SF2">
    <property type="entry name" value="PURINE NUCLEOSIDE PHOSPHORYLASE DEOD-TYPE"/>
    <property type="match status" value="1"/>
</dbReference>
<dbReference type="PANTHER" id="PTHR43691">
    <property type="entry name" value="URIDINE PHOSPHORYLASE"/>
    <property type="match status" value="1"/>
</dbReference>
<dbReference type="Pfam" id="PF01048">
    <property type="entry name" value="PNP_UDP_1"/>
    <property type="match status" value="1"/>
</dbReference>
<dbReference type="SUPFAM" id="SSF53167">
    <property type="entry name" value="Purine and uridine phosphorylases"/>
    <property type="match status" value="1"/>
</dbReference>
<dbReference type="PROSITE" id="PS01232">
    <property type="entry name" value="PNP_UDP_1"/>
    <property type="match status" value="1"/>
</dbReference>
<gene>
    <name evidence="2" type="primary">deoD</name>
    <name type="ordered locus">Ping_2864</name>
</gene>
<protein>
    <recommendedName>
        <fullName evidence="2">Purine nucleoside phosphorylase DeoD-type</fullName>
        <shortName evidence="2">PNP</shortName>
        <ecNumber evidence="2">2.4.2.1</ecNumber>
    </recommendedName>
</protein>
<keyword id="KW-0328">Glycosyltransferase</keyword>
<keyword id="KW-1185">Reference proteome</keyword>
<keyword id="KW-0808">Transferase</keyword>
<name>DEOD_PSYIN</name>
<sequence>MTTPHINAVDGAFAETVLMPGDPLRAKYIAENFLKDAVQVTDVRNMLGFTGTYKGKRVSVMGSGMGIPSCSIYATELFREYGVQNIIRVGSCGAVSRDIKLRDVIIGMGASTDSKANRIRFKGHDFAAIASYELLEKAVNAARALGIKARVGNIFSADTFYTPEPEVFDTLEKYNILGVEMEAAGLYGVAAEEGKNALCILTVSDHIRTGEKTTSDERQSSFNEMLIIALDSIVAE</sequence>
<accession>A1SYK4</accession>
<reference key="1">
    <citation type="journal article" date="2008" name="BMC Genomics">
        <title>Genomics of an extreme psychrophile, Psychromonas ingrahamii.</title>
        <authorList>
            <person name="Riley M."/>
            <person name="Staley J.T."/>
            <person name="Danchin A."/>
            <person name="Wang T.Z."/>
            <person name="Brettin T.S."/>
            <person name="Hauser L.J."/>
            <person name="Land M.L."/>
            <person name="Thompson L.S."/>
        </authorList>
    </citation>
    <scope>NUCLEOTIDE SEQUENCE [LARGE SCALE GENOMIC DNA]</scope>
    <source>
        <strain>DSM 17664 / CCUG 51855 / 37</strain>
    </source>
</reference>